<protein>
    <recommendedName>
        <fullName evidence="1">Glutathione-dependent formaldehyde-activating enzyme</fullName>
        <ecNumber evidence="1">4.4.1.22</ecNumber>
    </recommendedName>
    <alternativeName>
        <fullName evidence="1">S-(hydroxymethyl)glutathione synthase</fullName>
    </alternativeName>
</protein>
<sequence length="189" mass="20117">MTVHIHPAVDNGVKKGTGSFAGGTLVCKCSDRPVKVGIKGDVAHNHACGCTKCWKPDGATFSVVAVVPRGNVTVLENGDKLQIVDTSATIQRHACKVCGTHMFGRIENTGHPFYGLDFIHPELFYEQGSAAPEFAAFVSSIIESGVDPAQMPEIRSRLKELGLEPYDCLSPALMDAIAGHIAKTSRKAA</sequence>
<proteinExistence type="inferred from homology"/>
<organism>
    <name type="scientific">Rhodopseudomonas palustris (strain BisA53)</name>
    <dbReference type="NCBI Taxonomy" id="316055"/>
    <lineage>
        <taxon>Bacteria</taxon>
        <taxon>Pseudomonadati</taxon>
        <taxon>Pseudomonadota</taxon>
        <taxon>Alphaproteobacteria</taxon>
        <taxon>Hyphomicrobiales</taxon>
        <taxon>Nitrobacteraceae</taxon>
        <taxon>Rhodopseudomonas</taxon>
    </lineage>
</organism>
<evidence type="ECO:0000255" key="1">
    <source>
        <dbReference type="HAMAP-Rule" id="MF_00723"/>
    </source>
</evidence>
<evidence type="ECO:0000255" key="2">
    <source>
        <dbReference type="PROSITE-ProRule" id="PRU01239"/>
    </source>
</evidence>
<dbReference type="EC" id="4.4.1.22" evidence="1"/>
<dbReference type="EMBL" id="CP000463">
    <property type="protein sequence ID" value="ABJ08599.1"/>
    <property type="molecule type" value="Genomic_DNA"/>
</dbReference>
<dbReference type="SMR" id="Q07HI5"/>
<dbReference type="STRING" id="316055.RPE_4679"/>
<dbReference type="KEGG" id="rpe:RPE_4679"/>
<dbReference type="eggNOG" id="COG3791">
    <property type="taxonomic scope" value="Bacteria"/>
</dbReference>
<dbReference type="HOGENOM" id="CLU_090716_0_0_5"/>
<dbReference type="OrthoDB" id="9011205at2"/>
<dbReference type="UniPathway" id="UPA00562">
    <property type="reaction ID" value="UER00621"/>
</dbReference>
<dbReference type="GO" id="GO:0051907">
    <property type="term" value="F:S-(hydroxymethyl)glutathione synthase activity"/>
    <property type="evidence" value="ECO:0007669"/>
    <property type="project" value="UniProtKB-UniRule"/>
</dbReference>
<dbReference type="GO" id="GO:0008270">
    <property type="term" value="F:zinc ion binding"/>
    <property type="evidence" value="ECO:0007669"/>
    <property type="project" value="UniProtKB-UniRule"/>
</dbReference>
<dbReference type="GO" id="GO:0046294">
    <property type="term" value="P:formaldehyde catabolic process"/>
    <property type="evidence" value="ECO:0007669"/>
    <property type="project" value="UniProtKB-UniRule"/>
</dbReference>
<dbReference type="Gene3D" id="3.90.1590.10">
    <property type="entry name" value="glutathione-dependent formaldehyde- activating enzyme (gfa)"/>
    <property type="match status" value="1"/>
</dbReference>
<dbReference type="HAMAP" id="MF_00723">
    <property type="entry name" value="Formald_GSH"/>
    <property type="match status" value="1"/>
</dbReference>
<dbReference type="InterPro" id="IPR006913">
    <property type="entry name" value="CENP-V/GFA"/>
</dbReference>
<dbReference type="InterPro" id="IPR014185">
    <property type="entry name" value="Formald_GSH"/>
</dbReference>
<dbReference type="InterPro" id="IPR011057">
    <property type="entry name" value="Mss4-like_sf"/>
</dbReference>
<dbReference type="NCBIfam" id="TIGR02820">
    <property type="entry name" value="formald_GSH"/>
    <property type="match status" value="1"/>
</dbReference>
<dbReference type="NCBIfam" id="NF003829">
    <property type="entry name" value="PRK05417.1"/>
    <property type="match status" value="1"/>
</dbReference>
<dbReference type="PANTHER" id="PTHR33337:SF40">
    <property type="entry name" value="CENP-V_GFA DOMAIN-CONTAINING PROTEIN-RELATED"/>
    <property type="match status" value="1"/>
</dbReference>
<dbReference type="PANTHER" id="PTHR33337">
    <property type="entry name" value="GFA DOMAIN-CONTAINING PROTEIN"/>
    <property type="match status" value="1"/>
</dbReference>
<dbReference type="Pfam" id="PF04828">
    <property type="entry name" value="GFA"/>
    <property type="match status" value="1"/>
</dbReference>
<dbReference type="PIRSF" id="PIRSF033318">
    <property type="entry name" value="Formald_GSH"/>
    <property type="match status" value="1"/>
</dbReference>
<dbReference type="SUPFAM" id="SSF51316">
    <property type="entry name" value="Mss4-like"/>
    <property type="match status" value="1"/>
</dbReference>
<dbReference type="PROSITE" id="PS51891">
    <property type="entry name" value="CENP_V_GFA"/>
    <property type="match status" value="1"/>
</dbReference>
<name>GFA_RHOP5</name>
<keyword id="KW-0456">Lyase</keyword>
<keyword id="KW-0479">Metal-binding</keyword>
<keyword id="KW-0862">Zinc</keyword>
<reference key="1">
    <citation type="submission" date="2006-09" db="EMBL/GenBank/DDBJ databases">
        <title>Complete sequence of Rhodopseudomonas palustris BisA53.</title>
        <authorList>
            <consortium name="US DOE Joint Genome Institute"/>
            <person name="Copeland A."/>
            <person name="Lucas S."/>
            <person name="Lapidus A."/>
            <person name="Barry K."/>
            <person name="Detter J.C."/>
            <person name="Glavina del Rio T."/>
            <person name="Hammon N."/>
            <person name="Israni S."/>
            <person name="Dalin E."/>
            <person name="Tice H."/>
            <person name="Pitluck S."/>
            <person name="Chain P."/>
            <person name="Malfatti S."/>
            <person name="Shin M."/>
            <person name="Vergez L."/>
            <person name="Schmutz J."/>
            <person name="Larimer F."/>
            <person name="Land M."/>
            <person name="Hauser L."/>
            <person name="Pelletier D.A."/>
            <person name="Kyrpides N."/>
            <person name="Kim E."/>
            <person name="Harwood C.S."/>
            <person name="Oda Y."/>
            <person name="Richardson P."/>
        </authorList>
    </citation>
    <scope>NUCLEOTIDE SEQUENCE [LARGE SCALE GENOMIC DNA]</scope>
    <source>
        <strain>BisA53</strain>
    </source>
</reference>
<accession>Q07HI5</accession>
<feature type="chain" id="PRO_1000045839" description="Glutathione-dependent formaldehyde-activating enzyme">
    <location>
        <begin position="1"/>
        <end position="189"/>
    </location>
</feature>
<feature type="domain" description="CENP-V/GFA" evidence="2">
    <location>
        <begin position="20"/>
        <end position="167"/>
    </location>
</feature>
<feature type="binding site" evidence="1 2">
    <location>
        <position position="27"/>
    </location>
    <ligand>
        <name>Zn(2+)</name>
        <dbReference type="ChEBI" id="CHEBI:29105"/>
        <label>1</label>
        <note>structural</note>
    </ligand>
</feature>
<feature type="binding site" evidence="1 2">
    <location>
        <position position="29"/>
    </location>
    <ligand>
        <name>Zn(2+)</name>
        <dbReference type="ChEBI" id="CHEBI:29105"/>
        <label>1</label>
        <note>structural</note>
    </ligand>
</feature>
<feature type="binding site" evidence="1 2">
    <location>
        <position position="48"/>
    </location>
    <ligand>
        <name>Zn(2+)</name>
        <dbReference type="ChEBI" id="CHEBI:29105"/>
        <label>2</label>
        <note>catalytic</note>
    </ligand>
</feature>
<feature type="binding site" evidence="1 2">
    <location>
        <position position="50"/>
    </location>
    <ligand>
        <name>Zn(2+)</name>
        <dbReference type="ChEBI" id="CHEBI:29105"/>
        <label>2</label>
        <note>catalytic</note>
    </ligand>
</feature>
<feature type="binding site" evidence="1 2">
    <location>
        <position position="53"/>
    </location>
    <ligand>
        <name>Zn(2+)</name>
        <dbReference type="ChEBI" id="CHEBI:29105"/>
        <label>2</label>
        <note>catalytic</note>
    </ligand>
</feature>
<feature type="binding site" evidence="1 2">
    <location>
        <position position="95"/>
    </location>
    <ligand>
        <name>Zn(2+)</name>
        <dbReference type="ChEBI" id="CHEBI:29105"/>
        <label>1</label>
        <note>structural</note>
    </ligand>
</feature>
<feature type="binding site" evidence="1 2">
    <location>
        <position position="98"/>
    </location>
    <ligand>
        <name>Zn(2+)</name>
        <dbReference type="ChEBI" id="CHEBI:29105"/>
        <label>1</label>
        <note>structural</note>
    </ligand>
</feature>
<comment type="function">
    <text evidence="1">Catalyzes the condensation of formaldehyde and glutathione to S-hydroxymethylglutathione.</text>
</comment>
<comment type="catalytic activity">
    <reaction evidence="1">
        <text>S-(hydroxymethyl)glutathione = glutathione + formaldehyde</text>
        <dbReference type="Rhea" id="RHEA:22488"/>
        <dbReference type="ChEBI" id="CHEBI:16842"/>
        <dbReference type="ChEBI" id="CHEBI:57925"/>
        <dbReference type="ChEBI" id="CHEBI:58758"/>
        <dbReference type="EC" id="4.4.1.22"/>
    </reaction>
</comment>
<comment type="cofactor">
    <cofactor evidence="1 2">
        <name>Zn(2+)</name>
        <dbReference type="ChEBI" id="CHEBI:29105"/>
    </cofactor>
    <text evidence="1 2">Binds 2 Zn(2+) ions per subunit.</text>
</comment>
<comment type="pathway">
    <text evidence="1">One-carbon metabolism; formaldehyde degradation; formate from formaldehyde (glutathione route): step 1/3.</text>
</comment>
<comment type="similarity">
    <text evidence="1">Belongs to the Gfa family.</text>
</comment>
<gene>
    <name evidence="1" type="primary">gfa</name>
    <name type="ordered locus">RPE_4679</name>
</gene>